<protein>
    <recommendedName>
        <fullName evidence="1">Protein AaeX</fullName>
    </recommendedName>
</protein>
<proteinExistence type="inferred from homology"/>
<reference key="1">
    <citation type="journal article" date="2009" name="PLoS ONE">
        <title>Genome sequence of the versatile fish pathogen Edwardsiella tarda provides insights into its adaptation to broad host ranges and intracellular niches.</title>
        <authorList>
            <person name="Wang Q."/>
            <person name="Yang M."/>
            <person name="Xiao J."/>
            <person name="Wu H."/>
            <person name="Wang X."/>
            <person name="Lv Y."/>
            <person name="Xu L."/>
            <person name="Zheng H."/>
            <person name="Wang S."/>
            <person name="Zhao G."/>
            <person name="Liu Q."/>
            <person name="Zhang Y."/>
        </authorList>
    </citation>
    <scope>NUCLEOTIDE SEQUENCE [LARGE SCALE GENOMIC DNA]</scope>
    <source>
        <strain>EIB202 / CCTCC M208068</strain>
    </source>
</reference>
<accession>D0ZF88</accession>
<gene>
    <name evidence="1" type="primary">aaeX</name>
    <name type="ordered locus">ETAE_3128</name>
</gene>
<evidence type="ECO:0000255" key="1">
    <source>
        <dbReference type="HAMAP-Rule" id="MF_01546"/>
    </source>
</evidence>
<dbReference type="EMBL" id="CP001135">
    <property type="protein sequence ID" value="ACY85959.1"/>
    <property type="molecule type" value="Genomic_DNA"/>
</dbReference>
<dbReference type="RefSeq" id="WP_012849940.1">
    <property type="nucleotide sequence ID" value="NZ_JBCHVA010000003.1"/>
</dbReference>
<dbReference type="GeneID" id="72529894"/>
<dbReference type="KEGG" id="etr:ETAE_3128"/>
<dbReference type="HOGENOM" id="CLU_188292_0_0_6"/>
<dbReference type="OrthoDB" id="6080293at2"/>
<dbReference type="Proteomes" id="UP000002634">
    <property type="component" value="Chromosome"/>
</dbReference>
<dbReference type="GO" id="GO:0005886">
    <property type="term" value="C:plasma membrane"/>
    <property type="evidence" value="ECO:0007669"/>
    <property type="project" value="UniProtKB-SubCell"/>
</dbReference>
<dbReference type="HAMAP" id="MF_01546">
    <property type="entry name" value="AaeX"/>
    <property type="match status" value="1"/>
</dbReference>
<dbReference type="InterPro" id="IPR012451">
    <property type="entry name" value="DUF1656"/>
</dbReference>
<dbReference type="NCBIfam" id="NF008615">
    <property type="entry name" value="PRK11594.1"/>
    <property type="match status" value="1"/>
</dbReference>
<dbReference type="Pfam" id="PF07869">
    <property type="entry name" value="DUF1656"/>
    <property type="match status" value="1"/>
</dbReference>
<sequence length="67" mass="7697">MGTLPVMVLFGLSFPPAFFALLAALPLFWLLRRLLQPSGLYDMIWHPALFNCALYGCLFYLVSWLFI</sequence>
<organism>
    <name type="scientific">Edwardsiella piscicida</name>
    <dbReference type="NCBI Taxonomy" id="1263550"/>
    <lineage>
        <taxon>Bacteria</taxon>
        <taxon>Pseudomonadati</taxon>
        <taxon>Pseudomonadota</taxon>
        <taxon>Gammaproteobacteria</taxon>
        <taxon>Enterobacterales</taxon>
        <taxon>Hafniaceae</taxon>
        <taxon>Edwardsiella</taxon>
    </lineage>
</organism>
<comment type="subcellular location">
    <subcellularLocation>
        <location evidence="1">Cell membrane</location>
        <topology evidence="1">Multi-pass membrane protein</topology>
    </subcellularLocation>
</comment>
<comment type="similarity">
    <text evidence="1">Belongs to the AaeX family.</text>
</comment>
<feature type="chain" id="PRO_0000414009" description="Protein AaeX">
    <location>
        <begin position="1"/>
        <end position="67"/>
    </location>
</feature>
<feature type="transmembrane region" description="Helical" evidence="1">
    <location>
        <begin position="8"/>
        <end position="28"/>
    </location>
</feature>
<feature type="transmembrane region" description="Helical" evidence="1">
    <location>
        <begin position="47"/>
        <end position="67"/>
    </location>
</feature>
<name>AAEX_EDWPI</name>
<keyword id="KW-1003">Cell membrane</keyword>
<keyword id="KW-0472">Membrane</keyword>
<keyword id="KW-1185">Reference proteome</keyword>
<keyword id="KW-0812">Transmembrane</keyword>
<keyword id="KW-1133">Transmembrane helix</keyword>